<sequence>MLKIFTKLFGSKHDKDIKKIQPTIERINEIFSSLSSLSDDELRLKTASLKDRIQSALAETEQKRNDLEQKLDNPELDLNQADNINQELDTLDTQFEEKTAAILEEILPETFAIVKETCRRLKGLEYNVVGHSMTWDMVPYDVQLIGGVVLHSGKISEMATGEGKTLVSTLPAFLNALTGRGVHIVTVNDYLAQRDREWMKPVFDFHGLKTGVILTSMKPQERREQYLCDITYGTNNEFGFDYLRDNMAGAPADLVQRPFYYAIVDEVDSVLIDEARTPLIISGPVPHSNTDKFIEIQPWIERLVKSQQNLVAGYLTDAEKALKNKADDFDAGLALLRVKRGQPKNKRFIKVLSQTGIARLIQNVENEYLKDNASRMQEVDDELFYSVDEKTGTIDLTDKGRDFLSQLSKQDSDIFLVPDVGAEIAIIEAEKTLSAEEKIKRKDDIYRLFSERSERLHNISQLLKAYSLFDRDSEYVVQNGQVMIVDEFTGRILPGRRYSDGLHQAIEAKENVKIEGETQTLATITIQNYFRLYKKLGGMTGTAETESSEFFEIYSLDVVVIPTNKPIQRHDLNDFVFKTRREKYTAIIGKIIELQEKGQPVLVGTASVEVSETLSRMLRAKKIRHSVLNAKQHEQEAEIVAHAGEKGAVTIATNMAGRGTDIKLGQGVRESGGLFILGSERHESRRIDRQLRGRAGRQGDPGESIFYVSLEDNLMRLFGSERVISVMDRLGHEEGDIIEHPMVTKSIERAQKKVEEQNFAIRKRLLEYDDVLNQQREVIYKRRRNALIKERLTADIFDLLHDHATKVIEKYHPNADVDGLEEQVLRELSVEFKIESDEFEKNSVEENADKLFQTAIAFYKRKEEMVPSNIMRQIERYAVLSVIDQKWREHLREIDSVKEGINLRAYGQKDPLLEYKQEAYRLFVELLREIELETLSLAFKLFPVTPEAQEQIEERQKMSQVRKERLVAKHEESQGALNAAAAQRAERPSSSDPAAEKAGTTAQPVKAEQTPGRNDPCPCGSGKKYKNCCGR</sequence>
<name>SECA_PROA2</name>
<evidence type="ECO:0000255" key="1">
    <source>
        <dbReference type="HAMAP-Rule" id="MF_01382"/>
    </source>
</evidence>
<evidence type="ECO:0000256" key="2">
    <source>
        <dbReference type="SAM" id="MobiDB-lite"/>
    </source>
</evidence>
<dbReference type="EC" id="7.4.2.8" evidence="1"/>
<dbReference type="EMBL" id="CP001108">
    <property type="protein sequence ID" value="ACF46036.1"/>
    <property type="molecule type" value="Genomic_DNA"/>
</dbReference>
<dbReference type="RefSeq" id="WP_012505573.1">
    <property type="nucleotide sequence ID" value="NC_011059.1"/>
</dbReference>
<dbReference type="SMR" id="B4S7J9"/>
<dbReference type="STRING" id="290512.Paes_0997"/>
<dbReference type="KEGG" id="paa:Paes_0997"/>
<dbReference type="eggNOG" id="COG0653">
    <property type="taxonomic scope" value="Bacteria"/>
</dbReference>
<dbReference type="HOGENOM" id="CLU_005314_3_0_10"/>
<dbReference type="Proteomes" id="UP000002725">
    <property type="component" value="Chromosome"/>
</dbReference>
<dbReference type="GO" id="GO:0031522">
    <property type="term" value="C:cell envelope Sec protein transport complex"/>
    <property type="evidence" value="ECO:0007669"/>
    <property type="project" value="TreeGrafter"/>
</dbReference>
<dbReference type="GO" id="GO:0005829">
    <property type="term" value="C:cytosol"/>
    <property type="evidence" value="ECO:0007669"/>
    <property type="project" value="TreeGrafter"/>
</dbReference>
<dbReference type="GO" id="GO:0005886">
    <property type="term" value="C:plasma membrane"/>
    <property type="evidence" value="ECO:0007669"/>
    <property type="project" value="UniProtKB-SubCell"/>
</dbReference>
<dbReference type="GO" id="GO:0005524">
    <property type="term" value="F:ATP binding"/>
    <property type="evidence" value="ECO:0007669"/>
    <property type="project" value="UniProtKB-UniRule"/>
</dbReference>
<dbReference type="GO" id="GO:0046872">
    <property type="term" value="F:metal ion binding"/>
    <property type="evidence" value="ECO:0007669"/>
    <property type="project" value="UniProtKB-KW"/>
</dbReference>
<dbReference type="GO" id="GO:0008564">
    <property type="term" value="F:protein-exporting ATPase activity"/>
    <property type="evidence" value="ECO:0007669"/>
    <property type="project" value="UniProtKB-EC"/>
</dbReference>
<dbReference type="GO" id="GO:0065002">
    <property type="term" value="P:intracellular protein transmembrane transport"/>
    <property type="evidence" value="ECO:0007669"/>
    <property type="project" value="UniProtKB-UniRule"/>
</dbReference>
<dbReference type="GO" id="GO:0017038">
    <property type="term" value="P:protein import"/>
    <property type="evidence" value="ECO:0007669"/>
    <property type="project" value="InterPro"/>
</dbReference>
<dbReference type="GO" id="GO:0006605">
    <property type="term" value="P:protein targeting"/>
    <property type="evidence" value="ECO:0007669"/>
    <property type="project" value="UniProtKB-UniRule"/>
</dbReference>
<dbReference type="GO" id="GO:0043952">
    <property type="term" value="P:protein transport by the Sec complex"/>
    <property type="evidence" value="ECO:0007669"/>
    <property type="project" value="TreeGrafter"/>
</dbReference>
<dbReference type="CDD" id="cd17928">
    <property type="entry name" value="DEXDc_SecA"/>
    <property type="match status" value="1"/>
</dbReference>
<dbReference type="CDD" id="cd18803">
    <property type="entry name" value="SF2_C_secA"/>
    <property type="match status" value="1"/>
</dbReference>
<dbReference type="FunFam" id="3.40.50.300:FF:000246">
    <property type="entry name" value="Preprotein translocase subunit SecA"/>
    <property type="match status" value="1"/>
</dbReference>
<dbReference type="FunFam" id="3.40.50.300:FF:000694">
    <property type="entry name" value="Preprotein translocase subunit SecA"/>
    <property type="match status" value="1"/>
</dbReference>
<dbReference type="Gene3D" id="1.10.3060.10">
    <property type="entry name" value="Helical scaffold and wing domains of SecA"/>
    <property type="match status" value="1"/>
</dbReference>
<dbReference type="Gene3D" id="3.40.50.300">
    <property type="entry name" value="P-loop containing nucleotide triphosphate hydrolases"/>
    <property type="match status" value="2"/>
</dbReference>
<dbReference type="Gene3D" id="3.90.1440.10">
    <property type="entry name" value="SecA, preprotein cross-linking domain"/>
    <property type="match status" value="1"/>
</dbReference>
<dbReference type="HAMAP" id="MF_01382">
    <property type="entry name" value="SecA"/>
    <property type="match status" value="1"/>
</dbReference>
<dbReference type="InterPro" id="IPR014001">
    <property type="entry name" value="Helicase_ATP-bd"/>
</dbReference>
<dbReference type="InterPro" id="IPR001650">
    <property type="entry name" value="Helicase_C-like"/>
</dbReference>
<dbReference type="InterPro" id="IPR027417">
    <property type="entry name" value="P-loop_NTPase"/>
</dbReference>
<dbReference type="InterPro" id="IPR004027">
    <property type="entry name" value="SEC_C_motif"/>
</dbReference>
<dbReference type="InterPro" id="IPR000185">
    <property type="entry name" value="SecA"/>
</dbReference>
<dbReference type="InterPro" id="IPR020937">
    <property type="entry name" value="SecA_CS"/>
</dbReference>
<dbReference type="InterPro" id="IPR011115">
    <property type="entry name" value="SecA_DEAD"/>
</dbReference>
<dbReference type="InterPro" id="IPR014018">
    <property type="entry name" value="SecA_motor_DEAD"/>
</dbReference>
<dbReference type="InterPro" id="IPR011130">
    <property type="entry name" value="SecA_preprotein_X-link_dom"/>
</dbReference>
<dbReference type="InterPro" id="IPR044722">
    <property type="entry name" value="SecA_SF2_C"/>
</dbReference>
<dbReference type="InterPro" id="IPR011116">
    <property type="entry name" value="SecA_Wing/Scaffold"/>
</dbReference>
<dbReference type="InterPro" id="IPR036266">
    <property type="entry name" value="SecA_Wing/Scaffold_sf"/>
</dbReference>
<dbReference type="InterPro" id="IPR036670">
    <property type="entry name" value="SecA_X-link_sf"/>
</dbReference>
<dbReference type="NCBIfam" id="TIGR00963">
    <property type="entry name" value="secA"/>
    <property type="match status" value="1"/>
</dbReference>
<dbReference type="PANTHER" id="PTHR30612:SF0">
    <property type="entry name" value="CHLOROPLAST PROTEIN-TRANSPORTING ATPASE"/>
    <property type="match status" value="1"/>
</dbReference>
<dbReference type="PANTHER" id="PTHR30612">
    <property type="entry name" value="SECA INNER MEMBRANE COMPONENT OF SEC PROTEIN SECRETION SYSTEM"/>
    <property type="match status" value="1"/>
</dbReference>
<dbReference type="Pfam" id="PF21090">
    <property type="entry name" value="P-loop_SecA"/>
    <property type="match status" value="2"/>
</dbReference>
<dbReference type="Pfam" id="PF02810">
    <property type="entry name" value="SEC-C"/>
    <property type="match status" value="1"/>
</dbReference>
<dbReference type="Pfam" id="PF07517">
    <property type="entry name" value="SecA_DEAD"/>
    <property type="match status" value="1"/>
</dbReference>
<dbReference type="Pfam" id="PF01043">
    <property type="entry name" value="SecA_PP_bind"/>
    <property type="match status" value="1"/>
</dbReference>
<dbReference type="Pfam" id="PF07516">
    <property type="entry name" value="SecA_SW"/>
    <property type="match status" value="1"/>
</dbReference>
<dbReference type="PRINTS" id="PR00906">
    <property type="entry name" value="SECA"/>
</dbReference>
<dbReference type="SMART" id="SM00957">
    <property type="entry name" value="SecA_DEAD"/>
    <property type="match status" value="1"/>
</dbReference>
<dbReference type="SMART" id="SM00958">
    <property type="entry name" value="SecA_PP_bind"/>
    <property type="match status" value="1"/>
</dbReference>
<dbReference type="SUPFAM" id="SSF81886">
    <property type="entry name" value="Helical scaffold and wing domains of SecA"/>
    <property type="match status" value="1"/>
</dbReference>
<dbReference type="SUPFAM" id="SSF52540">
    <property type="entry name" value="P-loop containing nucleoside triphosphate hydrolases"/>
    <property type="match status" value="2"/>
</dbReference>
<dbReference type="SUPFAM" id="SSF81767">
    <property type="entry name" value="Pre-protein crosslinking domain of SecA"/>
    <property type="match status" value="1"/>
</dbReference>
<dbReference type="PROSITE" id="PS01312">
    <property type="entry name" value="SECA"/>
    <property type="match status" value="1"/>
</dbReference>
<dbReference type="PROSITE" id="PS51196">
    <property type="entry name" value="SECA_MOTOR_DEAD"/>
    <property type="match status" value="1"/>
</dbReference>
<keyword id="KW-0067">ATP-binding</keyword>
<keyword id="KW-0997">Cell inner membrane</keyword>
<keyword id="KW-1003">Cell membrane</keyword>
<keyword id="KW-0963">Cytoplasm</keyword>
<keyword id="KW-0472">Membrane</keyword>
<keyword id="KW-0479">Metal-binding</keyword>
<keyword id="KW-0547">Nucleotide-binding</keyword>
<keyword id="KW-0653">Protein transport</keyword>
<keyword id="KW-1278">Translocase</keyword>
<keyword id="KW-0811">Translocation</keyword>
<keyword id="KW-0813">Transport</keyword>
<keyword id="KW-0862">Zinc</keyword>
<feature type="chain" id="PRO_1000145043" description="Protein translocase subunit SecA">
    <location>
        <begin position="1"/>
        <end position="1031"/>
    </location>
</feature>
<feature type="region of interest" description="Disordered" evidence="2">
    <location>
        <begin position="963"/>
        <end position="1031"/>
    </location>
</feature>
<feature type="compositionally biased region" description="Basic and acidic residues" evidence="2">
    <location>
        <begin position="963"/>
        <end position="973"/>
    </location>
</feature>
<feature type="binding site" evidence="1">
    <location>
        <position position="143"/>
    </location>
    <ligand>
        <name>ATP</name>
        <dbReference type="ChEBI" id="CHEBI:30616"/>
    </ligand>
</feature>
<feature type="binding site" evidence="1">
    <location>
        <begin position="161"/>
        <end position="165"/>
    </location>
    <ligand>
        <name>ATP</name>
        <dbReference type="ChEBI" id="CHEBI:30616"/>
    </ligand>
</feature>
<feature type="binding site" evidence="1">
    <location>
        <position position="661"/>
    </location>
    <ligand>
        <name>ATP</name>
        <dbReference type="ChEBI" id="CHEBI:30616"/>
    </ligand>
</feature>
<feature type="binding site" evidence="1">
    <location>
        <position position="1017"/>
    </location>
    <ligand>
        <name>Zn(2+)</name>
        <dbReference type="ChEBI" id="CHEBI:29105"/>
    </ligand>
</feature>
<feature type="binding site" evidence="1">
    <location>
        <position position="1019"/>
    </location>
    <ligand>
        <name>Zn(2+)</name>
        <dbReference type="ChEBI" id="CHEBI:29105"/>
    </ligand>
</feature>
<feature type="binding site" evidence="1">
    <location>
        <position position="1028"/>
    </location>
    <ligand>
        <name>Zn(2+)</name>
        <dbReference type="ChEBI" id="CHEBI:29105"/>
    </ligand>
</feature>
<feature type="binding site" evidence="1">
    <location>
        <position position="1029"/>
    </location>
    <ligand>
        <name>Zn(2+)</name>
        <dbReference type="ChEBI" id="CHEBI:29105"/>
    </ligand>
</feature>
<accession>B4S7J9</accession>
<protein>
    <recommendedName>
        <fullName evidence="1">Protein translocase subunit SecA</fullName>
        <ecNumber evidence="1">7.4.2.8</ecNumber>
    </recommendedName>
</protein>
<comment type="function">
    <text evidence="1">Part of the Sec protein translocase complex. Interacts with the SecYEG preprotein conducting channel. Has a central role in coupling the hydrolysis of ATP to the transfer of proteins into and across the cell membrane, serving as an ATP-driven molecular motor driving the stepwise translocation of polypeptide chains across the membrane.</text>
</comment>
<comment type="catalytic activity">
    <reaction evidence="1">
        <text>ATP + H2O + cellular proteinSide 1 = ADP + phosphate + cellular proteinSide 2.</text>
        <dbReference type="EC" id="7.4.2.8"/>
    </reaction>
</comment>
<comment type="cofactor">
    <cofactor evidence="1">
        <name>Zn(2+)</name>
        <dbReference type="ChEBI" id="CHEBI:29105"/>
    </cofactor>
    <text evidence="1">May bind 1 zinc ion per subunit.</text>
</comment>
<comment type="subunit">
    <text evidence="1">Monomer and homodimer. Part of the essential Sec protein translocation apparatus which comprises SecA, SecYEG and auxiliary proteins SecDF. Other proteins may also be involved.</text>
</comment>
<comment type="subcellular location">
    <subcellularLocation>
        <location evidence="1">Cell inner membrane</location>
        <topology evidence="1">Peripheral membrane protein</topology>
        <orientation evidence="1">Cytoplasmic side</orientation>
    </subcellularLocation>
    <subcellularLocation>
        <location evidence="1">Cytoplasm</location>
    </subcellularLocation>
    <text evidence="1">Distribution is 50-50.</text>
</comment>
<comment type="similarity">
    <text evidence="1">Belongs to the SecA family.</text>
</comment>
<organism>
    <name type="scientific">Prosthecochloris aestuarii (strain DSM 271 / SK 413)</name>
    <dbReference type="NCBI Taxonomy" id="290512"/>
    <lineage>
        <taxon>Bacteria</taxon>
        <taxon>Pseudomonadati</taxon>
        <taxon>Chlorobiota</taxon>
        <taxon>Chlorobiia</taxon>
        <taxon>Chlorobiales</taxon>
        <taxon>Chlorobiaceae</taxon>
        <taxon>Prosthecochloris</taxon>
    </lineage>
</organism>
<proteinExistence type="inferred from homology"/>
<reference key="1">
    <citation type="submission" date="2008-06" db="EMBL/GenBank/DDBJ databases">
        <title>Complete sequence of chromosome of Prosthecochloris aestuarii DSM 271.</title>
        <authorList>
            <consortium name="US DOE Joint Genome Institute"/>
            <person name="Lucas S."/>
            <person name="Copeland A."/>
            <person name="Lapidus A."/>
            <person name="Glavina del Rio T."/>
            <person name="Dalin E."/>
            <person name="Tice H."/>
            <person name="Bruce D."/>
            <person name="Goodwin L."/>
            <person name="Pitluck S."/>
            <person name="Schmutz J."/>
            <person name="Larimer F."/>
            <person name="Land M."/>
            <person name="Hauser L."/>
            <person name="Kyrpides N."/>
            <person name="Anderson I."/>
            <person name="Liu Z."/>
            <person name="Li T."/>
            <person name="Zhao F."/>
            <person name="Overmann J."/>
            <person name="Bryant D.A."/>
            <person name="Richardson P."/>
        </authorList>
    </citation>
    <scope>NUCLEOTIDE SEQUENCE [LARGE SCALE GENOMIC DNA]</scope>
    <source>
        <strain>DSM 271 / SK 413</strain>
    </source>
</reference>
<gene>
    <name evidence="1" type="primary">secA</name>
    <name type="ordered locus">Paes_0997</name>
</gene>